<name>SYL_STAAC</name>
<reference key="1">
    <citation type="journal article" date="2005" name="J. Bacteriol.">
        <title>Insights on evolution of virulence and resistance from the complete genome analysis of an early methicillin-resistant Staphylococcus aureus strain and a biofilm-producing methicillin-resistant Staphylococcus epidermidis strain.</title>
        <authorList>
            <person name="Gill S.R."/>
            <person name="Fouts D.E."/>
            <person name="Archer G.L."/>
            <person name="Mongodin E.F."/>
            <person name="DeBoy R.T."/>
            <person name="Ravel J."/>
            <person name="Paulsen I.T."/>
            <person name="Kolonay J.F."/>
            <person name="Brinkac L.M."/>
            <person name="Beanan M.J."/>
            <person name="Dodson R.J."/>
            <person name="Daugherty S.C."/>
            <person name="Madupu R."/>
            <person name="Angiuoli S.V."/>
            <person name="Durkin A.S."/>
            <person name="Haft D.H."/>
            <person name="Vamathevan J.J."/>
            <person name="Khouri H."/>
            <person name="Utterback T.R."/>
            <person name="Lee C."/>
            <person name="Dimitrov G."/>
            <person name="Jiang L."/>
            <person name="Qin H."/>
            <person name="Weidman J."/>
            <person name="Tran K."/>
            <person name="Kang K.H."/>
            <person name="Hance I.R."/>
            <person name="Nelson K.E."/>
            <person name="Fraser C.M."/>
        </authorList>
    </citation>
    <scope>NUCLEOTIDE SEQUENCE [LARGE SCALE GENOMIC DNA]</scope>
    <source>
        <strain>COL</strain>
    </source>
</reference>
<dbReference type="EC" id="6.1.1.4" evidence="1"/>
<dbReference type="EMBL" id="CP000046">
    <property type="protein sequence ID" value="AAW38336.1"/>
    <property type="molecule type" value="Genomic_DNA"/>
</dbReference>
<dbReference type="RefSeq" id="WP_001549041.1">
    <property type="nucleotide sequence ID" value="NZ_JBGOFO010000008.1"/>
</dbReference>
<dbReference type="SMR" id="Q5HF16"/>
<dbReference type="KEGG" id="sac:SACOL1808"/>
<dbReference type="HOGENOM" id="CLU_004427_0_0_9"/>
<dbReference type="Proteomes" id="UP000000530">
    <property type="component" value="Chromosome"/>
</dbReference>
<dbReference type="GO" id="GO:0005829">
    <property type="term" value="C:cytosol"/>
    <property type="evidence" value="ECO:0007669"/>
    <property type="project" value="TreeGrafter"/>
</dbReference>
<dbReference type="GO" id="GO:0002161">
    <property type="term" value="F:aminoacyl-tRNA deacylase activity"/>
    <property type="evidence" value="ECO:0007669"/>
    <property type="project" value="InterPro"/>
</dbReference>
<dbReference type="GO" id="GO:0005524">
    <property type="term" value="F:ATP binding"/>
    <property type="evidence" value="ECO:0007669"/>
    <property type="project" value="UniProtKB-UniRule"/>
</dbReference>
<dbReference type="GO" id="GO:0004823">
    <property type="term" value="F:leucine-tRNA ligase activity"/>
    <property type="evidence" value="ECO:0007669"/>
    <property type="project" value="UniProtKB-UniRule"/>
</dbReference>
<dbReference type="GO" id="GO:0006429">
    <property type="term" value="P:leucyl-tRNA aminoacylation"/>
    <property type="evidence" value="ECO:0007669"/>
    <property type="project" value="UniProtKB-UniRule"/>
</dbReference>
<dbReference type="CDD" id="cd07958">
    <property type="entry name" value="Anticodon_Ia_Leu_BEm"/>
    <property type="match status" value="1"/>
</dbReference>
<dbReference type="CDD" id="cd00812">
    <property type="entry name" value="LeuRS_core"/>
    <property type="match status" value="1"/>
</dbReference>
<dbReference type="FunFam" id="1.10.730.10:FF:000012">
    <property type="entry name" value="Leucine--tRNA ligase"/>
    <property type="match status" value="1"/>
</dbReference>
<dbReference type="FunFam" id="1.10.730.10:FF:000018">
    <property type="entry name" value="Leucine--tRNA ligase"/>
    <property type="match status" value="1"/>
</dbReference>
<dbReference type="FunFam" id="3.10.20.590:FF:000001">
    <property type="entry name" value="Leucine--tRNA ligase"/>
    <property type="match status" value="1"/>
</dbReference>
<dbReference type="FunFam" id="3.40.50.620:FF:000056">
    <property type="entry name" value="Leucine--tRNA ligase"/>
    <property type="match status" value="1"/>
</dbReference>
<dbReference type="FunFam" id="3.40.50.620:FF:000077">
    <property type="entry name" value="Leucine--tRNA ligase"/>
    <property type="match status" value="1"/>
</dbReference>
<dbReference type="Gene3D" id="3.10.20.590">
    <property type="match status" value="1"/>
</dbReference>
<dbReference type="Gene3D" id="3.40.50.620">
    <property type="entry name" value="HUPs"/>
    <property type="match status" value="2"/>
</dbReference>
<dbReference type="Gene3D" id="1.10.730.10">
    <property type="entry name" value="Isoleucyl-tRNA Synthetase, Domain 1"/>
    <property type="match status" value="1"/>
</dbReference>
<dbReference type="HAMAP" id="MF_00049_B">
    <property type="entry name" value="Leu_tRNA_synth_B"/>
    <property type="match status" value="1"/>
</dbReference>
<dbReference type="InterPro" id="IPR001412">
    <property type="entry name" value="aa-tRNA-synth_I_CS"/>
</dbReference>
<dbReference type="InterPro" id="IPR002300">
    <property type="entry name" value="aa-tRNA-synth_Ia"/>
</dbReference>
<dbReference type="InterPro" id="IPR002302">
    <property type="entry name" value="Leu-tRNA-ligase"/>
</dbReference>
<dbReference type="InterPro" id="IPR025709">
    <property type="entry name" value="Leu_tRNA-synth_edit"/>
</dbReference>
<dbReference type="InterPro" id="IPR013155">
    <property type="entry name" value="M/V/L/I-tRNA-synth_anticd-bd"/>
</dbReference>
<dbReference type="InterPro" id="IPR015413">
    <property type="entry name" value="Methionyl/Leucyl_tRNA_Synth"/>
</dbReference>
<dbReference type="InterPro" id="IPR014729">
    <property type="entry name" value="Rossmann-like_a/b/a_fold"/>
</dbReference>
<dbReference type="InterPro" id="IPR009080">
    <property type="entry name" value="tRNAsynth_Ia_anticodon-bd"/>
</dbReference>
<dbReference type="InterPro" id="IPR009008">
    <property type="entry name" value="Val/Leu/Ile-tRNA-synth_edit"/>
</dbReference>
<dbReference type="NCBIfam" id="TIGR00396">
    <property type="entry name" value="leuS_bact"/>
    <property type="match status" value="1"/>
</dbReference>
<dbReference type="PANTHER" id="PTHR43740:SF2">
    <property type="entry name" value="LEUCINE--TRNA LIGASE, MITOCHONDRIAL"/>
    <property type="match status" value="1"/>
</dbReference>
<dbReference type="PANTHER" id="PTHR43740">
    <property type="entry name" value="LEUCYL-TRNA SYNTHETASE"/>
    <property type="match status" value="1"/>
</dbReference>
<dbReference type="Pfam" id="PF08264">
    <property type="entry name" value="Anticodon_1"/>
    <property type="match status" value="1"/>
</dbReference>
<dbReference type="Pfam" id="PF00133">
    <property type="entry name" value="tRNA-synt_1"/>
    <property type="match status" value="1"/>
</dbReference>
<dbReference type="Pfam" id="PF13603">
    <property type="entry name" value="tRNA-synt_1_2"/>
    <property type="match status" value="1"/>
</dbReference>
<dbReference type="Pfam" id="PF09334">
    <property type="entry name" value="tRNA-synt_1g"/>
    <property type="match status" value="1"/>
</dbReference>
<dbReference type="PRINTS" id="PR00985">
    <property type="entry name" value="TRNASYNTHLEU"/>
</dbReference>
<dbReference type="SUPFAM" id="SSF47323">
    <property type="entry name" value="Anticodon-binding domain of a subclass of class I aminoacyl-tRNA synthetases"/>
    <property type="match status" value="1"/>
</dbReference>
<dbReference type="SUPFAM" id="SSF52374">
    <property type="entry name" value="Nucleotidylyl transferase"/>
    <property type="match status" value="1"/>
</dbReference>
<dbReference type="SUPFAM" id="SSF50677">
    <property type="entry name" value="ValRS/IleRS/LeuRS editing domain"/>
    <property type="match status" value="1"/>
</dbReference>
<dbReference type="PROSITE" id="PS00178">
    <property type="entry name" value="AA_TRNA_LIGASE_I"/>
    <property type="match status" value="1"/>
</dbReference>
<feature type="chain" id="PRO_0000152082" description="Leucine--tRNA ligase">
    <location>
        <begin position="1"/>
        <end position="805"/>
    </location>
</feature>
<feature type="short sequence motif" description="'HIGH' region">
    <location>
        <begin position="41"/>
        <end position="52"/>
    </location>
</feature>
<feature type="short sequence motif" description="'KMSKS' region">
    <location>
        <begin position="577"/>
        <end position="581"/>
    </location>
</feature>
<feature type="binding site" evidence="1">
    <location>
        <position position="580"/>
    </location>
    <ligand>
        <name>ATP</name>
        <dbReference type="ChEBI" id="CHEBI:30616"/>
    </ligand>
</feature>
<organism>
    <name type="scientific">Staphylococcus aureus (strain COL)</name>
    <dbReference type="NCBI Taxonomy" id="93062"/>
    <lineage>
        <taxon>Bacteria</taxon>
        <taxon>Bacillati</taxon>
        <taxon>Bacillota</taxon>
        <taxon>Bacilli</taxon>
        <taxon>Bacillales</taxon>
        <taxon>Staphylococcaceae</taxon>
        <taxon>Staphylococcus</taxon>
    </lineage>
</organism>
<sequence>MLNYNHNQIEKKWQDYWDENKTFKTNDNLGQKKFYALDMFPYPSGAGLHVGHPEGYTATDIISRYKRMQGYNVLHPMGWDAFGLPAEQYALDTGNDPREFTKKNIQTFKRQIKELGFSYDWDREVNTTDPEYYKWTQWIFIQLYNKGLAYVDEVAVNWCPALGTVLSNEEVIDGVSERGGHPVYRKPMKQWVLKITEYADQLLADLDDLDWPESLKDMQRNWIGRSEGAKVSFDVDNTEGKVEVFTTRPDTIYGASFLVLSPEHALVNSITTDEYKEKVKAYQTEASKKSDLERTDLAKDKSGVFTGAYATNPLSGEKVQIWIADYVLSTYGTGAIMAVPAHDDRDYEFAKKFDLPIIEVIEGGNVEEAAYTGEGKHINSGELDGLENEAAITKAIQLLEQKGAGEKKVNYKLRDWLFSRQRYWGEPIPVIHWEDGTMTTVPEEELPLLLPETDEIKPSGTGESPLANIDSFVNVVDEKTGMKGRRETNTMPQWAGSCWYYLRYIDPKNENMLADPEKLKHWLPVDLYIGGVEHAVLHLLYARFWHKVLYDLAIVPTKEPFQKLFNQGMILGEGNEKMSKSKGNVINPDDIVQSHGADTLRLYEMFMGPLDAAIAWSEKGLDGSRRFLDRVWRLMVNEDGTLSSKIVTTNNKSLDKVYNQTVKKVTEDFETLGFNTAISQLMVFINECYKVDEVYKPYIEGFVKMLAPIAPHIGEELWSKLGHEESITYQPWPTYDEALLVDDEVEIVVQVNGKLRAKIKIAKDTSKEEMQEIALSNDNVKASIEGKDIMKVIAVPQKLVNIVAK</sequence>
<proteinExistence type="inferred from homology"/>
<protein>
    <recommendedName>
        <fullName evidence="1">Leucine--tRNA ligase</fullName>
        <ecNumber evidence="1">6.1.1.4</ecNumber>
    </recommendedName>
    <alternativeName>
        <fullName evidence="1">Leucyl-tRNA synthetase</fullName>
        <shortName evidence="1">LeuRS</shortName>
    </alternativeName>
</protein>
<accession>Q5HF16</accession>
<keyword id="KW-0030">Aminoacyl-tRNA synthetase</keyword>
<keyword id="KW-0067">ATP-binding</keyword>
<keyword id="KW-0963">Cytoplasm</keyword>
<keyword id="KW-0436">Ligase</keyword>
<keyword id="KW-0547">Nucleotide-binding</keyword>
<keyword id="KW-0648">Protein biosynthesis</keyword>
<gene>
    <name evidence="1" type="primary">leuS</name>
    <name type="ordered locus">SACOL1808</name>
</gene>
<comment type="catalytic activity">
    <reaction evidence="1">
        <text>tRNA(Leu) + L-leucine + ATP = L-leucyl-tRNA(Leu) + AMP + diphosphate</text>
        <dbReference type="Rhea" id="RHEA:11688"/>
        <dbReference type="Rhea" id="RHEA-COMP:9613"/>
        <dbReference type="Rhea" id="RHEA-COMP:9622"/>
        <dbReference type="ChEBI" id="CHEBI:30616"/>
        <dbReference type="ChEBI" id="CHEBI:33019"/>
        <dbReference type="ChEBI" id="CHEBI:57427"/>
        <dbReference type="ChEBI" id="CHEBI:78442"/>
        <dbReference type="ChEBI" id="CHEBI:78494"/>
        <dbReference type="ChEBI" id="CHEBI:456215"/>
        <dbReference type="EC" id="6.1.1.4"/>
    </reaction>
</comment>
<comment type="subcellular location">
    <subcellularLocation>
        <location evidence="1">Cytoplasm</location>
    </subcellularLocation>
</comment>
<comment type="similarity">
    <text evidence="1">Belongs to the class-I aminoacyl-tRNA synthetase family.</text>
</comment>
<evidence type="ECO:0000255" key="1">
    <source>
        <dbReference type="HAMAP-Rule" id="MF_00049"/>
    </source>
</evidence>